<protein>
    <recommendedName>
        <fullName evidence="1">Urease subunit gamma</fullName>
        <ecNumber evidence="1">3.5.1.5</ecNumber>
    </recommendedName>
    <alternativeName>
        <fullName evidence="1">Urea amidohydrolase subunit gamma</fullName>
    </alternativeName>
</protein>
<reference key="1">
    <citation type="journal article" date="2003" name="Nature">
        <title>Genome divergence in two Prochlorococcus ecotypes reflects oceanic niche differentiation.</title>
        <authorList>
            <person name="Rocap G."/>
            <person name="Larimer F.W."/>
            <person name="Lamerdin J.E."/>
            <person name="Malfatti S."/>
            <person name="Chain P."/>
            <person name="Ahlgren N.A."/>
            <person name="Arellano A."/>
            <person name="Coleman M."/>
            <person name="Hauser L."/>
            <person name="Hess W.R."/>
            <person name="Johnson Z.I."/>
            <person name="Land M.L."/>
            <person name="Lindell D."/>
            <person name="Post A.F."/>
            <person name="Regala W."/>
            <person name="Shah M."/>
            <person name="Shaw S.L."/>
            <person name="Steglich C."/>
            <person name="Sullivan M.B."/>
            <person name="Ting C.S."/>
            <person name="Tolonen A."/>
            <person name="Webb E.A."/>
            <person name="Zinser E.R."/>
            <person name="Chisholm S.W."/>
        </authorList>
    </citation>
    <scope>NUCLEOTIDE SEQUENCE [LARGE SCALE GENOMIC DNA]</scope>
    <source>
        <strain>MIT 9313</strain>
    </source>
</reference>
<evidence type="ECO:0000255" key="1">
    <source>
        <dbReference type="HAMAP-Rule" id="MF_00739"/>
    </source>
</evidence>
<sequence>MHLSPQEKDKLLIVTAALLAERRLNRGLRLNHPEAVAWLSFLVIEGARDGQSVAELMAEGSTWLRRDQVMDGVPELIPEVQIEAVFKDGTKLVTLHDPIR</sequence>
<dbReference type="EC" id="3.5.1.5" evidence="1"/>
<dbReference type="EMBL" id="BX548175">
    <property type="protein sequence ID" value="CAE22408.1"/>
    <property type="molecule type" value="Genomic_DNA"/>
</dbReference>
<dbReference type="RefSeq" id="WP_011131598.1">
    <property type="nucleotide sequence ID" value="NC_005071.1"/>
</dbReference>
<dbReference type="SMR" id="Q7V3V4"/>
<dbReference type="KEGG" id="pmt:PMT_2234"/>
<dbReference type="eggNOG" id="COG0831">
    <property type="taxonomic scope" value="Bacteria"/>
</dbReference>
<dbReference type="HOGENOM" id="CLU_145825_1_0_3"/>
<dbReference type="OrthoDB" id="9793527at2"/>
<dbReference type="UniPathway" id="UPA00258">
    <property type="reaction ID" value="UER00370"/>
</dbReference>
<dbReference type="Proteomes" id="UP000001423">
    <property type="component" value="Chromosome"/>
</dbReference>
<dbReference type="GO" id="GO:0005737">
    <property type="term" value="C:cytoplasm"/>
    <property type="evidence" value="ECO:0007669"/>
    <property type="project" value="UniProtKB-SubCell"/>
</dbReference>
<dbReference type="GO" id="GO:0016151">
    <property type="term" value="F:nickel cation binding"/>
    <property type="evidence" value="ECO:0007669"/>
    <property type="project" value="InterPro"/>
</dbReference>
<dbReference type="GO" id="GO:0009039">
    <property type="term" value="F:urease activity"/>
    <property type="evidence" value="ECO:0007669"/>
    <property type="project" value="UniProtKB-UniRule"/>
</dbReference>
<dbReference type="GO" id="GO:0043419">
    <property type="term" value="P:urea catabolic process"/>
    <property type="evidence" value="ECO:0007669"/>
    <property type="project" value="UniProtKB-UniRule"/>
</dbReference>
<dbReference type="CDD" id="cd00390">
    <property type="entry name" value="Urease_gamma"/>
    <property type="match status" value="1"/>
</dbReference>
<dbReference type="Gene3D" id="3.30.280.10">
    <property type="entry name" value="Urease, gamma-like subunit"/>
    <property type="match status" value="1"/>
</dbReference>
<dbReference type="HAMAP" id="MF_00739">
    <property type="entry name" value="Urease_gamma"/>
    <property type="match status" value="1"/>
</dbReference>
<dbReference type="InterPro" id="IPR012010">
    <property type="entry name" value="Urease_gamma"/>
</dbReference>
<dbReference type="InterPro" id="IPR002026">
    <property type="entry name" value="Urease_gamma/gamma-beta_su"/>
</dbReference>
<dbReference type="InterPro" id="IPR036463">
    <property type="entry name" value="Urease_gamma_sf"/>
</dbReference>
<dbReference type="InterPro" id="IPR050069">
    <property type="entry name" value="Urease_subunit"/>
</dbReference>
<dbReference type="NCBIfam" id="NF009712">
    <property type="entry name" value="PRK13241.1"/>
    <property type="match status" value="1"/>
</dbReference>
<dbReference type="NCBIfam" id="TIGR00193">
    <property type="entry name" value="urease_gam"/>
    <property type="match status" value="1"/>
</dbReference>
<dbReference type="PANTHER" id="PTHR33569">
    <property type="entry name" value="UREASE"/>
    <property type="match status" value="1"/>
</dbReference>
<dbReference type="PANTHER" id="PTHR33569:SF1">
    <property type="entry name" value="UREASE"/>
    <property type="match status" value="1"/>
</dbReference>
<dbReference type="Pfam" id="PF00547">
    <property type="entry name" value="Urease_gamma"/>
    <property type="match status" value="1"/>
</dbReference>
<dbReference type="PIRSF" id="PIRSF001223">
    <property type="entry name" value="Urease_gamma"/>
    <property type="match status" value="1"/>
</dbReference>
<dbReference type="SUPFAM" id="SSF54111">
    <property type="entry name" value="Urease, gamma-subunit"/>
    <property type="match status" value="1"/>
</dbReference>
<proteinExistence type="inferred from homology"/>
<accession>Q7V3V4</accession>
<organism>
    <name type="scientific">Prochlorococcus marinus (strain MIT 9313)</name>
    <dbReference type="NCBI Taxonomy" id="74547"/>
    <lineage>
        <taxon>Bacteria</taxon>
        <taxon>Bacillati</taxon>
        <taxon>Cyanobacteriota</taxon>
        <taxon>Cyanophyceae</taxon>
        <taxon>Synechococcales</taxon>
        <taxon>Prochlorococcaceae</taxon>
        <taxon>Prochlorococcus</taxon>
    </lineage>
</organism>
<comment type="catalytic activity">
    <reaction evidence="1">
        <text>urea + 2 H2O + H(+) = hydrogencarbonate + 2 NH4(+)</text>
        <dbReference type="Rhea" id="RHEA:20557"/>
        <dbReference type="ChEBI" id="CHEBI:15377"/>
        <dbReference type="ChEBI" id="CHEBI:15378"/>
        <dbReference type="ChEBI" id="CHEBI:16199"/>
        <dbReference type="ChEBI" id="CHEBI:17544"/>
        <dbReference type="ChEBI" id="CHEBI:28938"/>
        <dbReference type="EC" id="3.5.1.5"/>
    </reaction>
</comment>
<comment type="pathway">
    <text evidence="1">Nitrogen metabolism; urea degradation; CO(2) and NH(3) from urea (urease route): step 1/1.</text>
</comment>
<comment type="subunit">
    <text evidence="1">Heterotrimer of UreA (gamma), UreB (beta) and UreC (alpha) subunits. Three heterotrimers associate to form the active enzyme.</text>
</comment>
<comment type="subcellular location">
    <subcellularLocation>
        <location evidence="1">Cytoplasm</location>
    </subcellularLocation>
</comment>
<comment type="similarity">
    <text evidence="1">Belongs to the urease gamma subunit family.</text>
</comment>
<feature type="chain" id="PRO_0000098024" description="Urease subunit gamma">
    <location>
        <begin position="1"/>
        <end position="100"/>
    </location>
</feature>
<keyword id="KW-0963">Cytoplasm</keyword>
<keyword id="KW-0378">Hydrolase</keyword>
<keyword id="KW-1185">Reference proteome</keyword>
<name>URE3_PROMM</name>
<gene>
    <name evidence="1" type="primary">ureA</name>
    <name type="ordered locus">PMT_2234</name>
</gene>